<feature type="chain" id="PRO_0000312557" description="Small COPII coat GTPase SAR1B">
    <location>
        <begin position="1"/>
        <end position="194"/>
    </location>
</feature>
<feature type="region of interest" description="Mediates recruitment to ER membranes" evidence="2">
    <location>
        <begin position="10"/>
        <end position="14"/>
    </location>
</feature>
<feature type="short sequence motif" description="STAR; SAR1-N-terminal activation recruitment. Required for the activation and subsequent recruitment to ER membrane" evidence="2">
    <location>
        <begin position="2"/>
        <end position="4"/>
    </location>
</feature>
<feature type="binding site" evidence="1">
    <location>
        <position position="30"/>
    </location>
    <ligand>
        <name>GDP</name>
        <dbReference type="ChEBI" id="CHEBI:58189"/>
    </ligand>
</feature>
<feature type="binding site" evidence="3">
    <location>
        <position position="30"/>
    </location>
    <ligand>
        <name>GTP</name>
        <dbReference type="ChEBI" id="CHEBI:37565"/>
    </ligand>
</feature>
<feature type="binding site" evidence="1">
    <location>
        <position position="31"/>
    </location>
    <ligand>
        <name>GDP</name>
        <dbReference type="ChEBI" id="CHEBI:58189"/>
    </ligand>
</feature>
<feature type="binding site" evidence="1">
    <location>
        <position position="32"/>
    </location>
    <ligand>
        <name>GDP</name>
        <dbReference type="ChEBI" id="CHEBI:58189"/>
    </ligand>
</feature>
<feature type="binding site" evidence="3">
    <location>
        <position position="32"/>
    </location>
    <ligand>
        <name>GTP</name>
        <dbReference type="ChEBI" id="CHEBI:37565"/>
    </ligand>
</feature>
<feature type="binding site" evidence="1">
    <location>
        <position position="33"/>
    </location>
    <ligand>
        <name>GDP</name>
        <dbReference type="ChEBI" id="CHEBI:58189"/>
    </ligand>
</feature>
<feature type="binding site" evidence="3">
    <location>
        <position position="33"/>
    </location>
    <ligand>
        <name>GTP</name>
        <dbReference type="ChEBI" id="CHEBI:37565"/>
    </ligand>
</feature>
<feature type="binding site" evidence="1">
    <location>
        <position position="34"/>
    </location>
    <ligand>
        <name>GDP</name>
        <dbReference type="ChEBI" id="CHEBI:58189"/>
    </ligand>
</feature>
<feature type="binding site" evidence="3">
    <location>
        <position position="34"/>
    </location>
    <ligand>
        <name>GTP</name>
        <dbReference type="ChEBI" id="CHEBI:37565"/>
    </ligand>
</feature>
<feature type="binding site" evidence="1">
    <location>
        <position position="35"/>
    </location>
    <ligand>
        <name>GDP</name>
        <dbReference type="ChEBI" id="CHEBI:58189"/>
    </ligand>
</feature>
<feature type="binding site" evidence="3">
    <location>
        <position position="35"/>
    </location>
    <ligand>
        <name>GTP</name>
        <dbReference type="ChEBI" id="CHEBI:37565"/>
    </ligand>
</feature>
<feature type="binding site" evidence="1">
    <location>
        <position position="70"/>
    </location>
    <ligand>
        <name>Mg(2+)</name>
        <dbReference type="ChEBI" id="CHEBI:18420"/>
    </ligand>
</feature>
<feature type="binding site" evidence="1">
    <location>
        <position position="131"/>
    </location>
    <ligand>
        <name>GDP</name>
        <dbReference type="ChEBI" id="CHEBI:58189"/>
    </ligand>
</feature>
<feature type="binding site" evidence="3">
    <location>
        <position position="131"/>
    </location>
    <ligand>
        <name>GTP</name>
        <dbReference type="ChEBI" id="CHEBI:37565"/>
    </ligand>
</feature>
<feature type="binding site" evidence="1">
    <location>
        <position position="133"/>
    </location>
    <ligand>
        <name>GDP</name>
        <dbReference type="ChEBI" id="CHEBI:58189"/>
    </ligand>
</feature>
<feature type="binding site" evidence="3">
    <location>
        <position position="133"/>
    </location>
    <ligand>
        <name>GTP</name>
        <dbReference type="ChEBI" id="CHEBI:37565"/>
    </ligand>
</feature>
<feature type="binding site" evidence="1">
    <location>
        <position position="172"/>
    </location>
    <ligand>
        <name>GDP</name>
        <dbReference type="ChEBI" id="CHEBI:58189"/>
    </ligand>
</feature>
<feature type="binding site" evidence="3">
    <location>
        <position position="172"/>
    </location>
    <ligand>
        <name>GTP</name>
        <dbReference type="ChEBI" id="CHEBI:37565"/>
    </ligand>
</feature>
<accession>Q54Y14</accession>
<gene>
    <name type="primary">sarB</name>
    <name type="ORF">DDB_G0278477</name>
</gene>
<sequence length="194" mass="22175">MFLVDWFYNMFLWLGFFKKEAKIVIIGLGNAGKTTLLHLLVTGSLKSHIPTLRPNAESFTYGNVNFKAYDLGGQQNLRFLWKQYVPDSKTIIVFMVDSSDYNSIIESKSEIHDILGDEHLSQSPLLILGSKCDAKGHHNRENLIDLLDIRRFELGLNNSNNVPFDLIMTSSITRYGITDMLNWLDKCTDIIKNN</sequence>
<organism>
    <name type="scientific">Dictyostelium discoideum</name>
    <name type="common">Social amoeba</name>
    <dbReference type="NCBI Taxonomy" id="44689"/>
    <lineage>
        <taxon>Eukaryota</taxon>
        <taxon>Amoebozoa</taxon>
        <taxon>Evosea</taxon>
        <taxon>Eumycetozoa</taxon>
        <taxon>Dictyostelia</taxon>
        <taxon>Dictyosteliales</taxon>
        <taxon>Dictyosteliaceae</taxon>
        <taxon>Dictyostelium</taxon>
    </lineage>
</organism>
<reference key="1">
    <citation type="journal article" date="2005" name="Nature">
        <title>The genome of the social amoeba Dictyostelium discoideum.</title>
        <authorList>
            <person name="Eichinger L."/>
            <person name="Pachebat J.A."/>
            <person name="Gloeckner G."/>
            <person name="Rajandream M.A."/>
            <person name="Sucgang R."/>
            <person name="Berriman M."/>
            <person name="Song J."/>
            <person name="Olsen R."/>
            <person name="Szafranski K."/>
            <person name="Xu Q."/>
            <person name="Tunggal B."/>
            <person name="Kummerfeld S."/>
            <person name="Madera M."/>
            <person name="Konfortov B.A."/>
            <person name="Rivero F."/>
            <person name="Bankier A.T."/>
            <person name="Lehmann R."/>
            <person name="Hamlin N."/>
            <person name="Davies R."/>
            <person name="Gaudet P."/>
            <person name="Fey P."/>
            <person name="Pilcher K."/>
            <person name="Chen G."/>
            <person name="Saunders D."/>
            <person name="Sodergren E.J."/>
            <person name="Davis P."/>
            <person name="Kerhornou A."/>
            <person name="Nie X."/>
            <person name="Hall N."/>
            <person name="Anjard C."/>
            <person name="Hemphill L."/>
            <person name="Bason N."/>
            <person name="Farbrother P."/>
            <person name="Desany B."/>
            <person name="Just E."/>
            <person name="Morio T."/>
            <person name="Rost R."/>
            <person name="Churcher C.M."/>
            <person name="Cooper J."/>
            <person name="Haydock S."/>
            <person name="van Driessche N."/>
            <person name="Cronin A."/>
            <person name="Goodhead I."/>
            <person name="Muzny D.M."/>
            <person name="Mourier T."/>
            <person name="Pain A."/>
            <person name="Lu M."/>
            <person name="Harper D."/>
            <person name="Lindsay R."/>
            <person name="Hauser H."/>
            <person name="James K.D."/>
            <person name="Quiles M."/>
            <person name="Madan Babu M."/>
            <person name="Saito T."/>
            <person name="Buchrieser C."/>
            <person name="Wardroper A."/>
            <person name="Felder M."/>
            <person name="Thangavelu M."/>
            <person name="Johnson D."/>
            <person name="Knights A."/>
            <person name="Loulseged H."/>
            <person name="Mungall K.L."/>
            <person name="Oliver K."/>
            <person name="Price C."/>
            <person name="Quail M.A."/>
            <person name="Urushihara H."/>
            <person name="Hernandez J."/>
            <person name="Rabbinowitsch E."/>
            <person name="Steffen D."/>
            <person name="Sanders M."/>
            <person name="Ma J."/>
            <person name="Kohara Y."/>
            <person name="Sharp S."/>
            <person name="Simmonds M.N."/>
            <person name="Spiegler S."/>
            <person name="Tivey A."/>
            <person name="Sugano S."/>
            <person name="White B."/>
            <person name="Walker D."/>
            <person name="Woodward J.R."/>
            <person name="Winckler T."/>
            <person name="Tanaka Y."/>
            <person name="Shaulsky G."/>
            <person name="Schleicher M."/>
            <person name="Weinstock G.M."/>
            <person name="Rosenthal A."/>
            <person name="Cox E.C."/>
            <person name="Chisholm R.L."/>
            <person name="Gibbs R.A."/>
            <person name="Loomis W.F."/>
            <person name="Platzer M."/>
            <person name="Kay R.R."/>
            <person name="Williams J.G."/>
            <person name="Dear P.H."/>
            <person name="Noegel A.A."/>
            <person name="Barrell B.G."/>
            <person name="Kuspa A."/>
        </authorList>
    </citation>
    <scope>NUCLEOTIDE SEQUENCE [LARGE SCALE GENOMIC DNA]</scope>
    <source>
        <strain>AX4</strain>
    </source>
</reference>
<name>SAR1B_DICDI</name>
<dbReference type="EC" id="3.6.5.2" evidence="1"/>
<dbReference type="EMBL" id="AAFI02000023">
    <property type="protein sequence ID" value="EAL68411.1"/>
    <property type="molecule type" value="Genomic_DNA"/>
</dbReference>
<dbReference type="RefSeq" id="XP_642388.1">
    <property type="nucleotide sequence ID" value="XM_637296.1"/>
</dbReference>
<dbReference type="SMR" id="Q54Y14"/>
<dbReference type="FunCoup" id="Q54Y14">
    <property type="interactions" value="84"/>
</dbReference>
<dbReference type="STRING" id="44689.Q54Y14"/>
<dbReference type="PaxDb" id="44689-DDB0229966"/>
<dbReference type="EnsemblProtists" id="EAL68411">
    <property type="protein sequence ID" value="EAL68411"/>
    <property type="gene ID" value="DDB_G0278477"/>
</dbReference>
<dbReference type="GeneID" id="8621593"/>
<dbReference type="KEGG" id="ddi:DDB_G0278477"/>
<dbReference type="dictyBase" id="DDB_G0278477">
    <property type="gene designation" value="sarB"/>
</dbReference>
<dbReference type="VEuPathDB" id="AmoebaDB:DDB_G0278477"/>
<dbReference type="eggNOG" id="KOG0077">
    <property type="taxonomic scope" value="Eukaryota"/>
</dbReference>
<dbReference type="HOGENOM" id="CLU_040729_6_0_1"/>
<dbReference type="InParanoid" id="Q54Y14"/>
<dbReference type="OMA" id="NINFTAY"/>
<dbReference type="PhylomeDB" id="Q54Y14"/>
<dbReference type="PRO" id="PR:Q54Y14"/>
<dbReference type="Proteomes" id="UP000002195">
    <property type="component" value="Chromosome 3"/>
</dbReference>
<dbReference type="GO" id="GO:0030127">
    <property type="term" value="C:COPII vesicle coat"/>
    <property type="evidence" value="ECO:0000318"/>
    <property type="project" value="GO_Central"/>
</dbReference>
<dbReference type="GO" id="GO:0005829">
    <property type="term" value="C:cytosol"/>
    <property type="evidence" value="ECO:0007669"/>
    <property type="project" value="UniProtKB-SubCell"/>
</dbReference>
<dbReference type="GO" id="GO:0070971">
    <property type="term" value="C:endoplasmic reticulum exit site"/>
    <property type="evidence" value="ECO:0000318"/>
    <property type="project" value="GO_Central"/>
</dbReference>
<dbReference type="GO" id="GO:0005789">
    <property type="term" value="C:endoplasmic reticulum membrane"/>
    <property type="evidence" value="ECO:0007669"/>
    <property type="project" value="UniProtKB-SubCell"/>
</dbReference>
<dbReference type="GO" id="GO:0032580">
    <property type="term" value="C:Golgi cisterna membrane"/>
    <property type="evidence" value="ECO:0007669"/>
    <property type="project" value="UniProtKB-SubCell"/>
</dbReference>
<dbReference type="GO" id="GO:0005525">
    <property type="term" value="F:GTP binding"/>
    <property type="evidence" value="ECO:0007669"/>
    <property type="project" value="UniProtKB-KW"/>
</dbReference>
<dbReference type="GO" id="GO:0003924">
    <property type="term" value="F:GTPase activity"/>
    <property type="evidence" value="ECO:0000318"/>
    <property type="project" value="GO_Central"/>
</dbReference>
<dbReference type="GO" id="GO:0046872">
    <property type="term" value="F:metal ion binding"/>
    <property type="evidence" value="ECO:0007669"/>
    <property type="project" value="UniProtKB-KW"/>
</dbReference>
<dbReference type="GO" id="GO:0006888">
    <property type="term" value="P:endoplasmic reticulum to Golgi vesicle-mediated transport"/>
    <property type="evidence" value="ECO:0000318"/>
    <property type="project" value="GO_Central"/>
</dbReference>
<dbReference type="GO" id="GO:0006886">
    <property type="term" value="P:intracellular protein transport"/>
    <property type="evidence" value="ECO:0007669"/>
    <property type="project" value="InterPro"/>
</dbReference>
<dbReference type="GO" id="GO:0061024">
    <property type="term" value="P:membrane organization"/>
    <property type="evidence" value="ECO:0000318"/>
    <property type="project" value="GO_Central"/>
</dbReference>
<dbReference type="GO" id="GO:0003400">
    <property type="term" value="P:regulation of COPII vesicle coating"/>
    <property type="evidence" value="ECO:0000318"/>
    <property type="project" value="GO_Central"/>
</dbReference>
<dbReference type="GO" id="GO:0016050">
    <property type="term" value="P:vesicle organization"/>
    <property type="evidence" value="ECO:0000318"/>
    <property type="project" value="GO_Central"/>
</dbReference>
<dbReference type="CDD" id="cd00879">
    <property type="entry name" value="Sar1"/>
    <property type="match status" value="1"/>
</dbReference>
<dbReference type="FunFam" id="3.40.50.300:FF:000161">
    <property type="entry name" value="Small COPII coat GTPase"/>
    <property type="match status" value="1"/>
</dbReference>
<dbReference type="Gene3D" id="3.40.50.300">
    <property type="entry name" value="P-loop containing nucleotide triphosphate hydrolases"/>
    <property type="match status" value="1"/>
</dbReference>
<dbReference type="InterPro" id="IPR027417">
    <property type="entry name" value="P-loop_NTPase"/>
</dbReference>
<dbReference type="InterPro" id="IPR005225">
    <property type="entry name" value="Small_GTP-bd"/>
</dbReference>
<dbReference type="InterPro" id="IPR006689">
    <property type="entry name" value="Small_GTPase_ARF/SAR"/>
</dbReference>
<dbReference type="InterPro" id="IPR006687">
    <property type="entry name" value="Small_GTPase_SAR1"/>
</dbReference>
<dbReference type="NCBIfam" id="TIGR00231">
    <property type="entry name" value="small_GTP"/>
    <property type="match status" value="1"/>
</dbReference>
<dbReference type="PANTHER" id="PTHR45684">
    <property type="entry name" value="RE74312P"/>
    <property type="match status" value="1"/>
</dbReference>
<dbReference type="Pfam" id="PF00025">
    <property type="entry name" value="Arf"/>
    <property type="match status" value="1"/>
</dbReference>
<dbReference type="PRINTS" id="PR00328">
    <property type="entry name" value="SAR1GTPBP"/>
</dbReference>
<dbReference type="SMART" id="SM00177">
    <property type="entry name" value="ARF"/>
    <property type="match status" value="1"/>
</dbReference>
<dbReference type="SMART" id="SM00178">
    <property type="entry name" value="SAR"/>
    <property type="match status" value="1"/>
</dbReference>
<dbReference type="SUPFAM" id="SSF52540">
    <property type="entry name" value="P-loop containing nucleoside triphosphate hydrolases"/>
    <property type="match status" value="1"/>
</dbReference>
<dbReference type="PROSITE" id="PS51422">
    <property type="entry name" value="SAR1"/>
    <property type="match status" value="1"/>
</dbReference>
<proteinExistence type="inferred from homology"/>
<keyword id="KW-0963">Cytoplasm</keyword>
<keyword id="KW-0256">Endoplasmic reticulum</keyword>
<keyword id="KW-0931">ER-Golgi transport</keyword>
<keyword id="KW-0333">Golgi apparatus</keyword>
<keyword id="KW-0342">GTP-binding</keyword>
<keyword id="KW-0378">Hydrolase</keyword>
<keyword id="KW-0460">Magnesium</keyword>
<keyword id="KW-0472">Membrane</keyword>
<keyword id="KW-0479">Metal-binding</keyword>
<keyword id="KW-0547">Nucleotide-binding</keyword>
<keyword id="KW-0653">Protein transport</keyword>
<keyword id="KW-1185">Reference proteome</keyword>
<keyword id="KW-0813">Transport</keyword>
<comment type="function">
    <text evidence="1">Small GTPase that cycles between an active GTP-bound and an inactive GDP-bound state and mainly functions in vesicle-mediated endoplasmic reticulum (ER) to Golgi transport. The active GTP-bound form inserts into the endoplasmic reticulum membrane where it recruits the remainder of the coat protein complex II/COPII. The coat protein complex II assembling and polymerizing on endoplasmic reticulum membrane is responsible for both the sorting of cargos and the deformation and budding of membranes into vesicles destined to the Golgi.</text>
</comment>
<comment type="catalytic activity">
    <reaction evidence="1">
        <text>GTP + H2O = GDP + phosphate + H(+)</text>
        <dbReference type="Rhea" id="RHEA:19669"/>
        <dbReference type="ChEBI" id="CHEBI:15377"/>
        <dbReference type="ChEBI" id="CHEBI:15378"/>
        <dbReference type="ChEBI" id="CHEBI:37565"/>
        <dbReference type="ChEBI" id="CHEBI:43474"/>
        <dbReference type="ChEBI" id="CHEBI:58189"/>
        <dbReference type="EC" id="3.6.5.2"/>
    </reaction>
    <physiologicalReaction direction="left-to-right" evidence="1">
        <dbReference type="Rhea" id="RHEA:19670"/>
    </physiologicalReaction>
</comment>
<comment type="activity regulation">
    <text evidence="1">Small GTPases activation is mediated by guanine exchange factors (GEF), while inactivation through hydrolysis of the bound GTP is stimulated by GTPase activating proteins (GAP).</text>
</comment>
<comment type="subunit">
    <text evidence="1">Homodimer; upon association with membrane. Part of the coat protein complex II/COPII, composed of SEC23/24 and SEC13/31 heterodimers, that it helps recruit and assemble on endoplasmic reticulum (ER) membranes at ER exit sites.</text>
</comment>
<comment type="subcellular location">
    <subcellularLocation>
        <location evidence="1">Endoplasmic reticulum membrane</location>
        <topology evidence="1">Peripheral membrane protein</topology>
    </subcellularLocation>
    <subcellularLocation>
        <location evidence="1">Golgi apparatus</location>
        <location evidence="1">Golgi stack membrane</location>
        <topology evidence="1">Peripheral membrane protein</topology>
    </subcellularLocation>
    <subcellularLocation>
        <location evidence="1">Cytoplasm</location>
        <location evidence="1">Cytosol</location>
    </subcellularLocation>
    <text evidence="1">Active at endoplasmic reticulum exit sites (ERES) where it inserts into the membrane and recruits the remainder of the coat protein complex II/COPII.</text>
</comment>
<comment type="similarity">
    <text evidence="4">Belongs to the small GTPase superfamily. SAR1 family.</text>
</comment>
<evidence type="ECO:0000250" key="1">
    <source>
        <dbReference type="UniProtKB" id="Q9NR31"/>
    </source>
</evidence>
<evidence type="ECO:0000250" key="2">
    <source>
        <dbReference type="UniProtKB" id="Q9QVY3"/>
    </source>
</evidence>
<evidence type="ECO:0000250" key="3">
    <source>
        <dbReference type="UniProtKB" id="Q9Y6B6"/>
    </source>
</evidence>
<evidence type="ECO:0000305" key="4"/>
<protein>
    <recommendedName>
        <fullName evidence="1">Small COPII coat GTPase SAR1B</fullName>
        <ecNumber evidence="1">3.6.5.2</ecNumber>
    </recommendedName>
</protein>